<reference key="1">
    <citation type="journal article" date="1989" name="Nucleic Acids Res.">
        <title>The complete nucleotide sequence of the human gonadotropin-releasing hormone gene.</title>
        <authorList>
            <person name="Hayflick J.S."/>
            <person name="Adelman J.P."/>
            <person name="Seeburg P.H."/>
        </authorList>
    </citation>
    <scope>NUCLEOTIDE SEQUENCE [GENOMIC DNA]</scope>
</reference>
<reference key="2">
    <citation type="journal article" date="1986" name="Proc. Natl. Acad. Sci. U.S.A.">
        <title>Isolation of the gene and hypothalamic cDNA for the common precursor of gonadotropin-releasing hormone and prolactin release-inhibiting factor in human and rat.</title>
        <authorList>
            <person name="Adelman J.P."/>
            <person name="Mason A.J."/>
            <person name="Hayflick J.S."/>
            <person name="Seeburg P.H."/>
        </authorList>
    </citation>
    <scope>NUCLEOTIDE SEQUENCE [MRNA]</scope>
</reference>
<reference key="3">
    <citation type="journal article" date="1984" name="Nature">
        <title>Characterization of cDNA for precursor of human luteinizing hormone releasing hormone.</title>
        <authorList>
            <person name="Seeburg P.H."/>
            <person name="Adelman J.P."/>
        </authorList>
    </citation>
    <scope>NUCLEOTIDE SEQUENCE [MRNA]</scope>
    <scope>VARIANT SER-16</scope>
</reference>
<reference key="4">
    <citation type="journal article" date="2004" name="Genome Res.">
        <title>The status, quality, and expansion of the NIH full-length cDNA project: the Mammalian Gene Collection (MGC).</title>
        <authorList>
            <consortium name="The MGC Project Team"/>
        </authorList>
    </citation>
    <scope>NUCLEOTIDE SEQUENCE [LARGE SCALE MRNA]</scope>
    <source>
        <tissue>Brain</tissue>
    </source>
</reference>
<reference key="5">
    <citation type="journal article" date="1982" name="Biochem. Biophys. Res. Commun.">
        <title>The chemical identity of the immunoreactive LHRH-like peptide biosynthesized in the human placenta.</title>
        <authorList>
            <person name="Tan L."/>
            <person name="Rousseau P."/>
        </authorList>
    </citation>
    <scope>PROTEIN SEQUENCE OF 24-33</scope>
    <scope>PYROGLUTAMATE FORMATION AT GLN-24</scope>
    <scope>AMIDATION AT GLY-33</scope>
</reference>
<reference key="6">
    <citation type="journal article" date="1985" name="Proc. Natl. Acad. Sci. U.S.A.">
        <title>Novel activity of human angiotensin I converting enzyme: release of the NH2- and COOH-terminal tripeptides from the luteinizing hormone-releasing hormone.</title>
        <authorList>
            <person name="Skidgel R.A."/>
            <person name="Erdoes E.G."/>
        </authorList>
    </citation>
    <scope>PROTEOLYTIC CLEAVAGE (GONADOLIBERIN-1)</scope>
</reference>
<reference key="7">
    <citation type="journal article" date="1999" name="Eur. J. Biochem.">
        <title>Hydrolysis by somatic angiotensin-I converting enzyme of basic dipeptides from a cholecystokinin/gastrin and a LH-RH peptide extended at the C-terminus with gly-Arg/Lys-arg, but not from diarginyl insulin.</title>
        <authorList>
            <person name="Isaac R.E."/>
            <person name="Michaud A."/>
            <person name="Keen J.N."/>
            <person name="Williams T.A."/>
            <person name="Coates D."/>
            <person name="Wetsel W.C."/>
            <person name="Corvol P."/>
        </authorList>
    </citation>
    <scope>PROTEOLYTIC CLEAVAGE (GONADOLIBERIN-1)</scope>
</reference>
<reference key="8">
    <citation type="journal article" date="1993" name="J. Biol. Chem.">
        <title>Differences in the properties and enzymatic specificities of the two active sites of angiotensin I-converting enzyme (kininase II). Studies with bradykinin and other natural peptides.</title>
        <authorList>
            <person name="Jaspard E."/>
            <person name="Wei L."/>
            <person name="Alhenc-Gelas F."/>
        </authorList>
    </citation>
    <scope>PROTEOLYTIC CLEAVAGE (GONADOLIBERIN-1)</scope>
</reference>
<reference key="9">
    <citation type="journal article" date="2009" name="N. Engl. J. Med.">
        <title>Isolated familial hypogonadotropic hypogonadism and a GNRH1 mutation.</title>
        <authorList>
            <person name="Bouligand J."/>
            <person name="Ghervan C."/>
            <person name="Tello J.A."/>
            <person name="Brailly-Tabard S."/>
            <person name="Salenave S."/>
            <person name="Chanson P."/>
            <person name="Lombes M."/>
            <person name="Millar R.P."/>
            <person name="Guiochon-Mantel A."/>
            <person name="Young J."/>
        </authorList>
    </citation>
    <scope>INVOLVEMENT IN HH12</scope>
</reference>
<reference key="10">
    <citation type="journal article" date="2015" name="Nat. Commun.">
        <title>Atomic view of the histidine environment stabilizing higher-pH conformations of pH-dependent proteins.</title>
        <authorList>
            <person name="Valery C."/>
            <person name="Deville-Foillard S."/>
            <person name="Lefebvre C."/>
            <person name="Taberner N."/>
            <person name="Legrand P."/>
            <person name="Meneau F."/>
            <person name="Meriadec C."/>
            <person name="Delvaux C."/>
            <person name="Bizien T."/>
            <person name="Kasotakis E."/>
            <person name="Lopez-Iglesias C."/>
            <person name="Gall A."/>
            <person name="Bressanelli S."/>
            <person name="Le Du M.H."/>
            <person name="Paternostre M."/>
            <person name="Artzner F."/>
        </authorList>
    </citation>
    <scope>X-RAY CRYSTALLOGRAPHY (0.85 ANGSTROMS) OF 24-33</scope>
</reference>
<reference key="11">
    <citation type="journal article" date="1999" name="Nat. Genet.">
        <title>Characterization of single-nucleotide polymorphisms in coding regions of human genes.</title>
        <authorList>
            <person name="Cargill M."/>
            <person name="Altshuler D."/>
            <person name="Ireland J."/>
            <person name="Sklar P."/>
            <person name="Ardlie K."/>
            <person name="Patil N."/>
            <person name="Shaw N."/>
            <person name="Lane C.R."/>
            <person name="Lim E.P."/>
            <person name="Kalyanaraman N."/>
            <person name="Nemesh J."/>
            <person name="Ziaugra L."/>
            <person name="Friedland L."/>
            <person name="Rolfe A."/>
            <person name="Warrington J."/>
            <person name="Lipshutz R."/>
            <person name="Daley G.Q."/>
            <person name="Lander E.S."/>
        </authorList>
    </citation>
    <scope>VARIANT SER-16</scope>
</reference>
<reference key="12">
    <citation type="journal article" date="1999" name="Nat. Genet.">
        <authorList>
            <person name="Cargill M."/>
            <person name="Altshuler D."/>
            <person name="Ireland J."/>
            <person name="Sklar P."/>
            <person name="Ardlie K."/>
            <person name="Patil N."/>
            <person name="Shaw N."/>
            <person name="Lane C.R."/>
            <person name="Lim E.P."/>
            <person name="Kalyanaraman N."/>
            <person name="Nemesh J."/>
            <person name="Ziaugra L."/>
            <person name="Friedland L."/>
            <person name="Rolfe A."/>
            <person name="Warrington J."/>
            <person name="Lipshutz R."/>
            <person name="Daley G.Q."/>
            <person name="Lander E.S."/>
        </authorList>
    </citation>
    <scope>ERRATUM OF PUBMED:10391209</scope>
</reference>
<reference key="13">
    <citation type="journal article" date="2013" name="Am. J. Hum. Genet.">
        <title>Mutations in FGF17, IL17RD, DUSP6, SPRY4, and FLRT3 are identified in individuals with congenital hypogonadotropic hypogonadism.</title>
        <authorList>
            <person name="Miraoui H."/>
            <person name="Dwyer A.A."/>
            <person name="Sykiotis G.P."/>
            <person name="Plummer L."/>
            <person name="Chung W."/>
            <person name="Feng B."/>
            <person name="Beenken A."/>
            <person name="Clarke J."/>
            <person name="Pers T.H."/>
            <person name="Dworzynski P."/>
            <person name="Keefe K."/>
            <person name="Niedziela M."/>
            <person name="Raivio T."/>
            <person name="Crowley W.F. Jr."/>
            <person name="Seminara S.B."/>
            <person name="Quinton R."/>
            <person name="Hughes V.A."/>
            <person name="Kumanov P."/>
            <person name="Young J."/>
            <person name="Yialamas M.A."/>
            <person name="Hall J.E."/>
            <person name="Van Vliet G."/>
            <person name="Chanoine J.P."/>
            <person name="Rubenstein J."/>
            <person name="Mohammadi M."/>
            <person name="Tsai P.S."/>
            <person name="Sidis Y."/>
            <person name="Lage K."/>
            <person name="Pitteloud N."/>
        </authorList>
    </citation>
    <scope>VARIANT HH12 CYS-31</scope>
</reference>
<organism>
    <name type="scientific">Homo sapiens</name>
    <name type="common">Human</name>
    <dbReference type="NCBI Taxonomy" id="9606"/>
    <lineage>
        <taxon>Eukaryota</taxon>
        <taxon>Metazoa</taxon>
        <taxon>Chordata</taxon>
        <taxon>Craniata</taxon>
        <taxon>Vertebrata</taxon>
        <taxon>Euteleostomi</taxon>
        <taxon>Mammalia</taxon>
        <taxon>Eutheria</taxon>
        <taxon>Euarchontoglires</taxon>
        <taxon>Primates</taxon>
        <taxon>Haplorrhini</taxon>
        <taxon>Catarrhini</taxon>
        <taxon>Hominidae</taxon>
        <taxon>Homo</taxon>
    </lineage>
</organism>
<dbReference type="EMBL" id="X01059">
    <property type="protein sequence ID" value="CAA25526.1"/>
    <property type="molecule type" value="mRNA"/>
</dbReference>
<dbReference type="EMBL" id="M12578">
    <property type="protein sequence ID" value="AAA35916.1"/>
    <property type="molecule type" value="mRNA"/>
</dbReference>
<dbReference type="EMBL" id="X15215">
    <property type="protein sequence ID" value="CAA33285.1"/>
    <property type="molecule type" value="Genomic_DNA"/>
</dbReference>
<dbReference type="EMBL" id="BC126437">
    <property type="protein sequence ID" value="AAI26438.1"/>
    <property type="molecule type" value="mRNA"/>
</dbReference>
<dbReference type="EMBL" id="BC126463">
    <property type="protein sequence ID" value="AAI26464.1"/>
    <property type="molecule type" value="mRNA"/>
</dbReference>
<dbReference type="CCDS" id="CCDS43725.1"/>
<dbReference type="PIR" id="S05308">
    <property type="entry name" value="RHHUG"/>
</dbReference>
<dbReference type="RefSeq" id="NP_001076580.1">
    <property type="nucleotide sequence ID" value="NM_001083111.2"/>
</dbReference>
<dbReference type="PDB" id="4D5M">
    <property type="method" value="X-ray"/>
    <property type="resolution" value="0.85 A"/>
    <property type="chains" value="A/B/C/D=24-33"/>
</dbReference>
<dbReference type="PDBsum" id="4D5M"/>
<dbReference type="SMR" id="P01148"/>
<dbReference type="BioGRID" id="109058">
    <property type="interactions" value="10"/>
</dbReference>
<dbReference type="FunCoup" id="P01148">
    <property type="interactions" value="531"/>
</dbReference>
<dbReference type="IntAct" id="P01148">
    <property type="interactions" value="7"/>
</dbReference>
<dbReference type="STRING" id="9606.ENSP00000276414"/>
<dbReference type="DrugBank" id="DB00014">
    <property type="generic name" value="Goserelin"/>
</dbReference>
<dbReference type="DrugBank" id="DB00007">
    <property type="generic name" value="Leuprolide"/>
</dbReference>
<dbReference type="BioMuta" id="GNRH1"/>
<dbReference type="DMDM" id="121522"/>
<dbReference type="MassIVE" id="P01148"/>
<dbReference type="PaxDb" id="9606-ENSP00000276414"/>
<dbReference type="PeptideAtlas" id="P01148"/>
<dbReference type="ProteomicsDB" id="51339"/>
<dbReference type="Antibodypedia" id="5376">
    <property type="antibodies" value="486 antibodies from 34 providers"/>
</dbReference>
<dbReference type="DNASU" id="2796"/>
<dbReference type="Ensembl" id="ENST00000276414.4">
    <property type="protein sequence ID" value="ENSP00000276414.4"/>
    <property type="gene ID" value="ENSG00000147437.10"/>
</dbReference>
<dbReference type="Ensembl" id="ENST00000421054.7">
    <property type="protein sequence ID" value="ENSP00000391280.2"/>
    <property type="gene ID" value="ENSG00000147437.10"/>
</dbReference>
<dbReference type="GeneID" id="2796"/>
<dbReference type="KEGG" id="hsa:2796"/>
<dbReference type="MANE-Select" id="ENST00000421054.7">
    <property type="protein sequence ID" value="ENSP00000391280.2"/>
    <property type="RefSeq nucleotide sequence ID" value="NM_001083111.2"/>
    <property type="RefSeq protein sequence ID" value="NP_001076580.1"/>
</dbReference>
<dbReference type="UCSC" id="uc003xem.5">
    <property type="organism name" value="human"/>
</dbReference>
<dbReference type="AGR" id="HGNC:4419"/>
<dbReference type="CTD" id="2796"/>
<dbReference type="DisGeNET" id="2796"/>
<dbReference type="GeneCards" id="GNRH1"/>
<dbReference type="GeneReviews" id="GNRH1"/>
<dbReference type="HGNC" id="HGNC:4419">
    <property type="gene designation" value="GNRH1"/>
</dbReference>
<dbReference type="HPA" id="ENSG00000147437">
    <property type="expression patterns" value="Low tissue specificity"/>
</dbReference>
<dbReference type="MalaCards" id="GNRH1"/>
<dbReference type="MIM" id="152760">
    <property type="type" value="gene"/>
</dbReference>
<dbReference type="MIM" id="614841">
    <property type="type" value="phenotype"/>
</dbReference>
<dbReference type="neXtProt" id="NX_P01148"/>
<dbReference type="OpenTargets" id="ENSG00000147437"/>
<dbReference type="Orphanet" id="432">
    <property type="disease" value="Normosmic congenital hypogonadotropic hypogonadism"/>
</dbReference>
<dbReference type="PharmGKB" id="PA28798"/>
<dbReference type="VEuPathDB" id="HostDB:ENSG00000147437"/>
<dbReference type="eggNOG" id="ENOG502S8C8">
    <property type="taxonomic scope" value="Eukaryota"/>
</dbReference>
<dbReference type="GeneTree" id="ENSGT00390000008225"/>
<dbReference type="HOGENOM" id="CLU_2412553_0_0_1"/>
<dbReference type="InParanoid" id="P01148"/>
<dbReference type="OMA" id="FECTVHQ"/>
<dbReference type="OrthoDB" id="8716567at2759"/>
<dbReference type="PAN-GO" id="P01148">
    <property type="GO annotations" value="4 GO annotations based on evolutionary models"/>
</dbReference>
<dbReference type="PhylomeDB" id="P01148"/>
<dbReference type="TreeFam" id="TF330934"/>
<dbReference type="PathwayCommons" id="P01148"/>
<dbReference type="Reactome" id="R-HSA-375281">
    <property type="pathway name" value="Hormone ligand-binding receptors"/>
</dbReference>
<dbReference type="Reactome" id="R-HSA-416476">
    <property type="pathway name" value="G alpha (q) signalling events"/>
</dbReference>
<dbReference type="SignaLink" id="P01148"/>
<dbReference type="SIGNOR" id="P01148"/>
<dbReference type="BioGRID-ORCS" id="2796">
    <property type="hits" value="17 hits in 1163 CRISPR screens"/>
</dbReference>
<dbReference type="EvolutionaryTrace" id="P01148"/>
<dbReference type="GeneWiki" id="Gonadotropin-releasing_hormone"/>
<dbReference type="GenomeRNAi" id="2796"/>
<dbReference type="Pharos" id="P01148">
    <property type="development level" value="Tbio"/>
</dbReference>
<dbReference type="PRO" id="PR:P01148"/>
<dbReference type="Proteomes" id="UP000005640">
    <property type="component" value="Chromosome 8"/>
</dbReference>
<dbReference type="RNAct" id="P01148">
    <property type="molecule type" value="protein"/>
</dbReference>
<dbReference type="Bgee" id="ENSG00000147437">
    <property type="expression patterns" value="Expressed in tibial nerve and 107 other cell types or tissues"/>
</dbReference>
<dbReference type="GO" id="GO:0043679">
    <property type="term" value="C:axon terminus"/>
    <property type="evidence" value="ECO:0007669"/>
    <property type="project" value="Ensembl"/>
</dbReference>
<dbReference type="GO" id="GO:0098556">
    <property type="term" value="C:cytoplasmic side of rough endoplasmic reticulum membrane"/>
    <property type="evidence" value="ECO:0007669"/>
    <property type="project" value="Ensembl"/>
</dbReference>
<dbReference type="GO" id="GO:0030425">
    <property type="term" value="C:dendrite"/>
    <property type="evidence" value="ECO:0007669"/>
    <property type="project" value="Ensembl"/>
</dbReference>
<dbReference type="GO" id="GO:0005576">
    <property type="term" value="C:extracellular region"/>
    <property type="evidence" value="ECO:0000304"/>
    <property type="project" value="Reactome"/>
</dbReference>
<dbReference type="GO" id="GO:0005615">
    <property type="term" value="C:extracellular space"/>
    <property type="evidence" value="ECO:0000250"/>
    <property type="project" value="UniProtKB"/>
</dbReference>
<dbReference type="GO" id="GO:0005798">
    <property type="term" value="C:Golgi-associated vesicle"/>
    <property type="evidence" value="ECO:0007669"/>
    <property type="project" value="Ensembl"/>
</dbReference>
<dbReference type="GO" id="GO:1990008">
    <property type="term" value="C:neurosecretory vesicle"/>
    <property type="evidence" value="ECO:0007669"/>
    <property type="project" value="Ensembl"/>
</dbReference>
<dbReference type="GO" id="GO:0043204">
    <property type="term" value="C:perikaryon"/>
    <property type="evidence" value="ECO:0007669"/>
    <property type="project" value="Ensembl"/>
</dbReference>
<dbReference type="GO" id="GO:0005183">
    <property type="term" value="F:gonadotropin hormone-releasing hormone activity"/>
    <property type="evidence" value="ECO:0000318"/>
    <property type="project" value="GO_Central"/>
</dbReference>
<dbReference type="GO" id="GO:0031530">
    <property type="term" value="F:gonadotropin-releasing hormone receptor binding"/>
    <property type="evidence" value="ECO:0000318"/>
    <property type="project" value="GO_Central"/>
</dbReference>
<dbReference type="GO" id="GO:0005179">
    <property type="term" value="F:hormone activity"/>
    <property type="evidence" value="ECO:0000304"/>
    <property type="project" value="ProtInc"/>
</dbReference>
<dbReference type="GO" id="GO:0007267">
    <property type="term" value="P:cell-cell signaling"/>
    <property type="evidence" value="ECO:0000304"/>
    <property type="project" value="ProtInc"/>
</dbReference>
<dbReference type="GO" id="GO:0044849">
    <property type="term" value="P:estrous cycle"/>
    <property type="evidence" value="ECO:0007669"/>
    <property type="project" value="Ensembl"/>
</dbReference>
<dbReference type="GO" id="GO:0007565">
    <property type="term" value="P:female pregnancy"/>
    <property type="evidence" value="ECO:0007669"/>
    <property type="project" value="Ensembl"/>
</dbReference>
<dbReference type="GO" id="GO:0030238">
    <property type="term" value="P:male sex determination"/>
    <property type="evidence" value="ECO:0007669"/>
    <property type="project" value="Ensembl"/>
</dbReference>
<dbReference type="GO" id="GO:0043066">
    <property type="term" value="P:negative regulation of apoptotic process"/>
    <property type="evidence" value="ECO:0007669"/>
    <property type="project" value="Ensembl"/>
</dbReference>
<dbReference type="GO" id="GO:0033087">
    <property type="term" value="P:negative regulation of immature T cell proliferation"/>
    <property type="evidence" value="ECO:0007669"/>
    <property type="project" value="Ensembl"/>
</dbReference>
<dbReference type="GO" id="GO:2001223">
    <property type="term" value="P:negative regulation of neuron migration"/>
    <property type="evidence" value="ECO:0007669"/>
    <property type="project" value="Ensembl"/>
</dbReference>
<dbReference type="GO" id="GO:0010468">
    <property type="term" value="P:regulation of gene expression"/>
    <property type="evidence" value="ECO:0007669"/>
    <property type="project" value="Ensembl"/>
</dbReference>
<dbReference type="GO" id="GO:2000354">
    <property type="term" value="P:regulation of ovarian follicle development"/>
    <property type="evidence" value="ECO:0007669"/>
    <property type="project" value="Ensembl"/>
</dbReference>
<dbReference type="GO" id="GO:0023051">
    <property type="term" value="P:regulation of signaling"/>
    <property type="evidence" value="ECO:0000318"/>
    <property type="project" value="GO_Central"/>
</dbReference>
<dbReference type="GO" id="GO:0045471">
    <property type="term" value="P:response to ethanol"/>
    <property type="evidence" value="ECO:0007669"/>
    <property type="project" value="Ensembl"/>
</dbReference>
<dbReference type="GO" id="GO:0032496">
    <property type="term" value="P:response to lipopolysaccharide"/>
    <property type="evidence" value="ECO:0007669"/>
    <property type="project" value="Ensembl"/>
</dbReference>
<dbReference type="GO" id="GO:0035864">
    <property type="term" value="P:response to potassium ion"/>
    <property type="evidence" value="ECO:0007669"/>
    <property type="project" value="Ensembl"/>
</dbReference>
<dbReference type="GO" id="GO:1990637">
    <property type="term" value="P:response to prolactin"/>
    <property type="evidence" value="ECO:0007669"/>
    <property type="project" value="Ensembl"/>
</dbReference>
<dbReference type="GO" id="GO:0034695">
    <property type="term" value="P:response to prostaglandin E"/>
    <property type="evidence" value="ECO:0007669"/>
    <property type="project" value="Ensembl"/>
</dbReference>
<dbReference type="GO" id="GO:0048545">
    <property type="term" value="P:response to steroid hormone"/>
    <property type="evidence" value="ECO:0007669"/>
    <property type="project" value="Ensembl"/>
</dbReference>
<dbReference type="GO" id="GO:0033574">
    <property type="term" value="P:response to testosterone"/>
    <property type="evidence" value="ECO:0007669"/>
    <property type="project" value="Ensembl"/>
</dbReference>
<dbReference type="GO" id="GO:0007165">
    <property type="term" value="P:signal transduction"/>
    <property type="evidence" value="ECO:0000304"/>
    <property type="project" value="ProtInc"/>
</dbReference>
<dbReference type="InterPro" id="IPR002012">
    <property type="entry name" value="GnRH"/>
</dbReference>
<dbReference type="InterPro" id="IPR019792">
    <property type="entry name" value="Gonadoliberin"/>
</dbReference>
<dbReference type="InterPro" id="IPR004079">
    <property type="entry name" value="Gonadoliberin_I_precursor"/>
</dbReference>
<dbReference type="PANTHER" id="PTHR10522">
    <property type="entry name" value="GONADOLIBERIN"/>
    <property type="match status" value="1"/>
</dbReference>
<dbReference type="PANTHER" id="PTHR10522:SF0">
    <property type="entry name" value="PROGONADOLIBERIN-1"/>
    <property type="match status" value="1"/>
</dbReference>
<dbReference type="Pfam" id="PF00446">
    <property type="entry name" value="GnRH"/>
    <property type="match status" value="1"/>
</dbReference>
<dbReference type="PRINTS" id="PR01541">
    <property type="entry name" value="GONADOLIBRNI"/>
</dbReference>
<dbReference type="PROSITE" id="PS00473">
    <property type="entry name" value="GNRH"/>
    <property type="match status" value="1"/>
</dbReference>
<proteinExistence type="evidence at protein level"/>
<feature type="signal peptide" evidence="8">
    <location>
        <begin position="1"/>
        <end position="23"/>
    </location>
</feature>
<feature type="chain" id="PRO_0000012395" description="Progonadoliberin-1">
    <location>
        <begin position="24"/>
        <end position="92"/>
    </location>
</feature>
<feature type="peptide" id="PRO_0000012396" description="Gonadoliberin-1" evidence="8">
    <location>
        <begin position="24"/>
        <end position="33"/>
    </location>
</feature>
<feature type="peptide" id="PRO_0000012397" description="GnRH-associated peptide 1">
    <location>
        <begin position="37"/>
        <end position="92"/>
    </location>
</feature>
<feature type="site" description="Cleavage; by ACE" evidence="6">
    <location>
        <begin position="26"/>
        <end position="27"/>
    </location>
</feature>
<feature type="site" description="Appears to be essential for biological activity">
    <location>
        <position position="26"/>
    </location>
</feature>
<feature type="site" description="Cleavage; by ACE" evidence="6">
    <location>
        <begin position="28"/>
        <end position="29"/>
    </location>
</feature>
<feature type="site" description="Cleavage; by ACE" evidence="6">
    <location>
        <begin position="30"/>
        <end position="31"/>
    </location>
</feature>
<feature type="site" description="Cleavage; by ACE" evidence="1">
    <location>
        <begin position="33"/>
        <end position="34"/>
    </location>
</feature>
<feature type="modified residue" description="Pyrrolidone carboxylic acid" evidence="8">
    <location>
        <position position="24"/>
    </location>
</feature>
<feature type="modified residue" description="Glycine amide" evidence="8">
    <location>
        <position position="33"/>
    </location>
</feature>
<feature type="sequence variant" id="VAR_013943" description="In dbSNP:rs6185." evidence="2 7">
    <original>W</original>
    <variation>S</variation>
    <location>
        <position position="16"/>
    </location>
</feature>
<feature type="sequence variant" id="VAR_069966" description="In HH12; uncertain significance; the patient also carries mutations in PROKR2 and FGFR1." evidence="4">
    <original>R</original>
    <variation>C</variation>
    <location>
        <position position="31"/>
    </location>
</feature>
<feature type="helix" evidence="11">
    <location>
        <begin position="26"/>
        <end position="28"/>
    </location>
</feature>
<keyword id="KW-0002">3D-structure</keyword>
<keyword id="KW-0027">Amidation</keyword>
<keyword id="KW-0165">Cleavage on pair of basic residues</keyword>
<keyword id="KW-0903">Direct protein sequencing</keyword>
<keyword id="KW-0225">Disease variant</keyword>
<keyword id="KW-0372">Hormone</keyword>
<keyword id="KW-1016">Hypogonadotropic hypogonadism</keyword>
<keyword id="KW-0956">Kallmann syndrome</keyword>
<keyword id="KW-0582">Pharmaceutical</keyword>
<keyword id="KW-1267">Proteomics identification</keyword>
<keyword id="KW-0873">Pyrrolidone carboxylic acid</keyword>
<keyword id="KW-1185">Reference proteome</keyword>
<keyword id="KW-0964">Secreted</keyword>
<keyword id="KW-0732">Signal</keyword>
<sequence>MKPIQKLLAGLILLTWCVEGCSSQHWSYGLRPGGKRDAENLIDSFQEIVKEVGQLAETQRFECTTHQPRSPLRDLKGALESLIEEETGQKKI</sequence>
<name>GON1_HUMAN</name>
<gene>
    <name type="primary">GNRH1</name>
    <name type="synonym">GNRH</name>
    <name type="synonym">GRH</name>
    <name type="synonym">LHRH</name>
</gene>
<comment type="function">
    <text>Stimulates the secretion of gonadotropins; it stimulates the secretion of both luteinizing and follicle-stimulating hormones.</text>
</comment>
<comment type="subcellular location">
    <subcellularLocation>
        <location>Secreted</location>
    </subcellularLocation>
</comment>
<comment type="PTM">
    <molecule>Gonadoliberin-1</molecule>
    <text evidence="1 6 9">The precursor is cleaved by ACE, which removes the Gly-Lys-Arg peptide at the C-terminus, leading to mature hormone (PubMed:10336644, PubMed:7683654). The mature form of Gonadoliberin-1 is also cleaved and degraded by ACE (PubMed:2983326, PubMed:7683654).</text>
</comment>
<comment type="disease" evidence="3 4">
    <disease id="DI-03572">
        <name>Hypogonadotropic hypogonadism 12 with or without anosmia</name>
        <acronym>HH12</acronym>
        <description>A disorder characterized by absent or incomplete sexual maturation by the age of 18 years, in conjunction with low levels of circulating gonadotropins and testosterone and no other abnormalities of the hypothalamic-pituitary axis. In some cases, it is associated with non-reproductive phenotypes, such as anosmia, cleft palate, and sensorineural hearing loss. Anosmia or hyposmia is related to the absence or hypoplasia of the olfactory bulbs and tracts. Hypogonadism is due to deficiency in gonadotropin-releasing hormone and probably results from a failure of embryonic migration of gonadotropin-releasing hormone-synthesizing neurons. In the presence of anosmia, idiopathic hypogonadotropic hypogonadism is referred to as Kallmann syndrome, whereas in the presence of a normal sense of smell, it has been termed normosmic idiopathic hypogonadotropic hypogonadism (nIHH).</description>
        <dbReference type="MIM" id="614841"/>
    </disease>
    <text evidence="4">The disease is caused by variants affecting distinct genetic loci, including the gene represented in this entry. The genetics of hypogonadotropic hypogonadism involves various modes of transmission. Oligogenic inheritance has been reported in some patients carrying mutations in GNRH1 as well as in other HH-associated genes including PROKR2 and FGFR1 (PubMed:23643382).</text>
</comment>
<comment type="pharmaceutical">
    <text>Available under the names Factrel (Ayerst Labs), Lutrepulse or Lutrelef (Ferring Pharmaceuticals) and Relisorm (Serono). Used in evaluating hypothalamic-pituitary gonadotropic function.</text>
</comment>
<comment type="miscellaneous">
    <text evidence="5">The 3D-structure was determined for the synthetic analog Triptorelin.</text>
</comment>
<comment type="similarity">
    <text evidence="10">Belongs to the GnRH family.</text>
</comment>
<comment type="online information" name="Wikipedia">
    <link uri="https://en.wikipedia.org/wiki/Gonadotropin-releasing_hormone"/>
    <text>Gonadotropin-releasing hormone entry</text>
</comment>
<evidence type="ECO:0000269" key="1">
    <source>
    </source>
</evidence>
<evidence type="ECO:0000269" key="2">
    <source>
    </source>
</evidence>
<evidence type="ECO:0000269" key="3">
    <source>
    </source>
</evidence>
<evidence type="ECO:0000269" key="4">
    <source>
    </source>
</evidence>
<evidence type="ECO:0000269" key="5">
    <source>
    </source>
</evidence>
<evidence type="ECO:0000269" key="6">
    <source>
    </source>
</evidence>
<evidence type="ECO:0000269" key="7">
    <source>
    </source>
</evidence>
<evidence type="ECO:0000269" key="8">
    <source>
    </source>
</evidence>
<evidence type="ECO:0000269" key="9">
    <source>
    </source>
</evidence>
<evidence type="ECO:0000305" key="10"/>
<evidence type="ECO:0007829" key="11">
    <source>
        <dbReference type="PDB" id="4D5M"/>
    </source>
</evidence>
<accession>P01148</accession>
<accession>A0AVP0</accession>
<protein>
    <recommendedName>
        <fullName>Progonadoliberin-1</fullName>
    </recommendedName>
    <alternativeName>
        <fullName>Progonadoliberin I</fullName>
    </alternativeName>
    <component>
        <recommendedName>
            <fullName>Gonadoliberin-1</fullName>
        </recommendedName>
        <alternativeName>
            <fullName>Gonadoliberin I</fullName>
        </alternativeName>
        <alternativeName>
            <fullName>Gonadorelin</fullName>
        </alternativeName>
        <alternativeName>
            <fullName>Gonadotropin-releasing hormone I</fullName>
            <shortName>GnRH-I</shortName>
        </alternativeName>
        <alternativeName>
            <fullName>Luliberin I</fullName>
        </alternativeName>
        <alternativeName>
            <fullName>Luteinizing hormone-releasing hormone I</fullName>
            <shortName>LH-RH I</shortName>
        </alternativeName>
    </component>
    <component>
        <recommendedName>
            <fullName>GnRH-associated peptide 1</fullName>
        </recommendedName>
        <alternativeName>
            <fullName>GnRH-associated peptide I</fullName>
        </alternativeName>
    </component>
</protein>